<gene>
    <name evidence="1" type="primary">rnfD</name>
    <name type="ordered locus">ESA_01989</name>
</gene>
<dbReference type="EC" id="7.-.-.-" evidence="1"/>
<dbReference type="EMBL" id="CP000783">
    <property type="protein sequence ID" value="ABU77242.1"/>
    <property type="molecule type" value="Genomic_DNA"/>
</dbReference>
<dbReference type="RefSeq" id="WP_012124905.1">
    <property type="nucleotide sequence ID" value="NC_009778.1"/>
</dbReference>
<dbReference type="SMR" id="A7MML0"/>
<dbReference type="KEGG" id="esa:ESA_01989"/>
<dbReference type="PATRIC" id="fig|290339.8.peg.1774"/>
<dbReference type="HOGENOM" id="CLU_042020_0_0_6"/>
<dbReference type="Proteomes" id="UP000000260">
    <property type="component" value="Chromosome"/>
</dbReference>
<dbReference type="GO" id="GO:0005886">
    <property type="term" value="C:plasma membrane"/>
    <property type="evidence" value="ECO:0007669"/>
    <property type="project" value="UniProtKB-SubCell"/>
</dbReference>
<dbReference type="GO" id="GO:0022900">
    <property type="term" value="P:electron transport chain"/>
    <property type="evidence" value="ECO:0007669"/>
    <property type="project" value="UniProtKB-UniRule"/>
</dbReference>
<dbReference type="GO" id="GO:0055085">
    <property type="term" value="P:transmembrane transport"/>
    <property type="evidence" value="ECO:0007669"/>
    <property type="project" value="InterPro"/>
</dbReference>
<dbReference type="HAMAP" id="MF_00462">
    <property type="entry name" value="RsxD_RnfD"/>
    <property type="match status" value="1"/>
</dbReference>
<dbReference type="InterPro" id="IPR004338">
    <property type="entry name" value="NqrB/RnfD"/>
</dbReference>
<dbReference type="InterPro" id="IPR011303">
    <property type="entry name" value="RnfD_bac"/>
</dbReference>
<dbReference type="NCBIfam" id="NF002011">
    <property type="entry name" value="PRK00816.1"/>
    <property type="match status" value="1"/>
</dbReference>
<dbReference type="NCBIfam" id="TIGR01946">
    <property type="entry name" value="rnfD"/>
    <property type="match status" value="1"/>
</dbReference>
<dbReference type="PANTHER" id="PTHR30578">
    <property type="entry name" value="ELECTRON TRANSPORT COMPLEX PROTEIN RNFD"/>
    <property type="match status" value="1"/>
</dbReference>
<dbReference type="PANTHER" id="PTHR30578:SF0">
    <property type="entry name" value="ION-TRANSLOCATING OXIDOREDUCTASE COMPLEX SUBUNIT D"/>
    <property type="match status" value="1"/>
</dbReference>
<dbReference type="Pfam" id="PF03116">
    <property type="entry name" value="NQR2_RnfD_RnfE"/>
    <property type="match status" value="1"/>
</dbReference>
<organism>
    <name type="scientific">Cronobacter sakazakii (strain ATCC BAA-894)</name>
    <name type="common">Enterobacter sakazakii</name>
    <dbReference type="NCBI Taxonomy" id="290339"/>
    <lineage>
        <taxon>Bacteria</taxon>
        <taxon>Pseudomonadati</taxon>
        <taxon>Pseudomonadota</taxon>
        <taxon>Gammaproteobacteria</taxon>
        <taxon>Enterobacterales</taxon>
        <taxon>Enterobacteriaceae</taxon>
        <taxon>Cronobacter</taxon>
    </lineage>
</organism>
<protein>
    <recommendedName>
        <fullName evidence="1">Ion-translocating oxidoreductase complex subunit D</fullName>
        <ecNumber evidence="1">7.-.-.-</ecNumber>
    </recommendedName>
    <alternativeName>
        <fullName evidence="1">Rnf electron transport complex subunit D</fullName>
    </alternativeName>
</protein>
<sequence length="350" mass="37626">MVFRIASSPYTHNQRQTSRIMMLVTLATVPGIAVQWYFFGYGSLVQILLAIVSALASEALVIRLRKLPLKSHLGDNSALLTGLLLGVSIPPLAPWWMVVLGTAFAVIIAKQLYGGLGHNPFNPAMIGYVVLLISFPVQMTNWLPPQQIAATAPGFLDALQVIFHGVTASGDTMSQLRLGIDGVSQATPLDTFKTGLHAGHPAGELLAQPIYGGALAGLGWQWVNLAYLAGGLFLLARGTIRWHIPVSFLVTLAVCSTLGWLIAPEKFLSPLMHLLSGATMLGAFFILTDPVTASTTNKGRLVFGALVGLLVWLIRSFGGYPDGVAFAVLLANITVPLIDYYTRPRVYGHR</sequence>
<keyword id="KW-0997">Cell inner membrane</keyword>
<keyword id="KW-1003">Cell membrane</keyword>
<keyword id="KW-0249">Electron transport</keyword>
<keyword id="KW-0285">Flavoprotein</keyword>
<keyword id="KW-0288">FMN</keyword>
<keyword id="KW-0472">Membrane</keyword>
<keyword id="KW-0597">Phosphoprotein</keyword>
<keyword id="KW-1185">Reference proteome</keyword>
<keyword id="KW-1278">Translocase</keyword>
<keyword id="KW-0812">Transmembrane</keyword>
<keyword id="KW-1133">Transmembrane helix</keyword>
<keyword id="KW-0813">Transport</keyword>
<feature type="chain" id="PRO_1000013624" description="Ion-translocating oxidoreductase complex subunit D">
    <location>
        <begin position="1"/>
        <end position="350"/>
    </location>
</feature>
<feature type="transmembrane region" description="Helical" evidence="1">
    <location>
        <begin position="20"/>
        <end position="39"/>
    </location>
</feature>
<feature type="transmembrane region" description="Helical" evidence="1">
    <location>
        <begin position="89"/>
        <end position="109"/>
    </location>
</feature>
<feature type="transmembrane region" description="Helical" evidence="1">
    <location>
        <begin position="123"/>
        <end position="143"/>
    </location>
</feature>
<feature type="transmembrane region" description="Helical" evidence="1">
    <location>
        <begin position="215"/>
        <end position="235"/>
    </location>
</feature>
<feature type="transmembrane region" description="Helical" evidence="1">
    <location>
        <begin position="244"/>
        <end position="264"/>
    </location>
</feature>
<feature type="transmembrane region" description="Helical" evidence="1">
    <location>
        <begin position="267"/>
        <end position="287"/>
    </location>
</feature>
<feature type="transmembrane region" description="Helical" evidence="1">
    <location>
        <begin position="301"/>
        <end position="321"/>
    </location>
</feature>
<feature type="transmembrane region" description="Helical" evidence="1">
    <location>
        <begin position="322"/>
        <end position="342"/>
    </location>
</feature>
<feature type="modified residue" description="FMN phosphoryl threonine" evidence="1">
    <location>
        <position position="187"/>
    </location>
</feature>
<accession>A7MML0</accession>
<evidence type="ECO:0000255" key="1">
    <source>
        <dbReference type="HAMAP-Rule" id="MF_00462"/>
    </source>
</evidence>
<reference key="1">
    <citation type="journal article" date="2010" name="PLoS ONE">
        <title>Genome sequence of Cronobacter sakazakii BAA-894 and comparative genomic hybridization analysis with other Cronobacter species.</title>
        <authorList>
            <person name="Kucerova E."/>
            <person name="Clifton S.W."/>
            <person name="Xia X.Q."/>
            <person name="Long F."/>
            <person name="Porwollik S."/>
            <person name="Fulton L."/>
            <person name="Fronick C."/>
            <person name="Minx P."/>
            <person name="Kyung K."/>
            <person name="Warren W."/>
            <person name="Fulton R."/>
            <person name="Feng D."/>
            <person name="Wollam A."/>
            <person name="Shah N."/>
            <person name="Bhonagiri V."/>
            <person name="Nash W.E."/>
            <person name="Hallsworth-Pepin K."/>
            <person name="Wilson R.K."/>
            <person name="McClelland M."/>
            <person name="Forsythe S.J."/>
        </authorList>
    </citation>
    <scope>NUCLEOTIDE SEQUENCE [LARGE SCALE GENOMIC DNA]</scope>
    <source>
        <strain>ATCC BAA-894</strain>
    </source>
</reference>
<name>RNFD_CROS8</name>
<comment type="function">
    <text evidence="1">Part of a membrane-bound complex that couples electron transfer with translocation of ions across the membrane.</text>
</comment>
<comment type="cofactor">
    <cofactor evidence="1">
        <name>FMN</name>
        <dbReference type="ChEBI" id="CHEBI:58210"/>
    </cofactor>
</comment>
<comment type="subunit">
    <text evidence="1">The complex is composed of six subunits: RnfA, RnfB, RnfC, RnfD, RnfE and RnfG.</text>
</comment>
<comment type="subcellular location">
    <subcellularLocation>
        <location evidence="1">Cell inner membrane</location>
        <topology evidence="1">Multi-pass membrane protein</topology>
    </subcellularLocation>
</comment>
<comment type="similarity">
    <text evidence="1">Belongs to the NqrB/RnfD family.</text>
</comment>
<proteinExistence type="inferred from homology"/>